<keyword id="KW-0025">Alternative splicing</keyword>
<keyword id="KW-0067">ATP-binding</keyword>
<keyword id="KW-0963">Cytoplasm</keyword>
<keyword id="KW-0418">Kinase</keyword>
<keyword id="KW-0547">Nucleotide-binding</keyword>
<keyword id="KW-0597">Phosphoprotein</keyword>
<keyword id="KW-1185">Reference proteome</keyword>
<keyword id="KW-0723">Serine/threonine-protein kinase</keyword>
<keyword id="KW-0808">Transferase</keyword>
<accession>Q8BPM2</accession>
<accession>Q6PEQ2</accession>
<accession>Q8C3U5</accession>
<accession>Q8CGF3</accession>
<accession>Q99LM7</accession>
<accession>Q9CX73</accession>
<dbReference type="EC" id="2.7.11.1"/>
<dbReference type="EMBL" id="AK019468">
    <property type="protein sequence ID" value="BAB31739.1"/>
    <property type="molecule type" value="mRNA"/>
</dbReference>
<dbReference type="EMBL" id="AK053775">
    <property type="protein sequence ID" value="BAC35517.1"/>
    <property type="molecule type" value="mRNA"/>
</dbReference>
<dbReference type="EMBL" id="AK084891">
    <property type="protein sequence ID" value="BAC39305.1"/>
    <property type="molecule type" value="mRNA"/>
</dbReference>
<dbReference type="EMBL" id="BC002309">
    <property type="protein sequence ID" value="AAH02309.1"/>
    <property type="molecule type" value="mRNA"/>
</dbReference>
<dbReference type="EMBL" id="BC040381">
    <property type="protein sequence ID" value="AAH40381.2"/>
    <property type="molecule type" value="mRNA"/>
</dbReference>
<dbReference type="EMBL" id="BC057930">
    <property type="protein sequence ID" value="AAH57930.1"/>
    <property type="molecule type" value="mRNA"/>
</dbReference>
<dbReference type="RefSeq" id="NP_958927.2">
    <molecule id="Q8BPM2-1"/>
    <property type="nucleotide sequence ID" value="NM_201519.2"/>
</dbReference>
<dbReference type="SMR" id="Q8BPM2"/>
<dbReference type="FunCoup" id="Q8BPM2">
    <property type="interactions" value="3826"/>
</dbReference>
<dbReference type="STRING" id="10090.ENSMUSP00000106199"/>
<dbReference type="iPTMnet" id="Q8BPM2"/>
<dbReference type="PhosphoSitePlus" id="Q8BPM2"/>
<dbReference type="jPOST" id="Q8BPM2"/>
<dbReference type="PaxDb" id="10090-ENSMUSP00000106199"/>
<dbReference type="PeptideAtlas" id="Q8BPM2"/>
<dbReference type="ProteomicsDB" id="252703">
    <molecule id="Q8BPM2-1"/>
</dbReference>
<dbReference type="ProteomicsDB" id="252704">
    <molecule id="Q8BPM2-2"/>
</dbReference>
<dbReference type="Pumba" id="Q8BPM2"/>
<dbReference type="Antibodypedia" id="23648">
    <property type="antibodies" value="189 antibodies from 26 providers"/>
</dbReference>
<dbReference type="DNASU" id="399510"/>
<dbReference type="Ensembl" id="ENSMUST00000110567.8">
    <molecule id="Q8BPM2-2"/>
    <property type="protein sequence ID" value="ENSMUSP00000106196.2"/>
    <property type="gene ID" value="ENSMUSG00000034761.17"/>
</dbReference>
<dbReference type="Ensembl" id="ENSMUST00000110570.8">
    <molecule id="Q8BPM2-1"/>
    <property type="protein sequence ID" value="ENSMUSP00000106199.2"/>
    <property type="gene ID" value="ENSMUSG00000034761.17"/>
</dbReference>
<dbReference type="GeneID" id="399510"/>
<dbReference type="KEGG" id="mmu:399510"/>
<dbReference type="UCSC" id="uc007nsu.1">
    <molecule id="Q8BPM2-1"/>
    <property type="organism name" value="mouse"/>
</dbReference>
<dbReference type="UCSC" id="uc011yne.1">
    <molecule id="Q8BPM2-2"/>
    <property type="organism name" value="mouse"/>
</dbReference>
<dbReference type="AGR" id="MGI:1925503"/>
<dbReference type="CTD" id="11183"/>
<dbReference type="MGI" id="MGI:1925503">
    <property type="gene designation" value="Map4k5"/>
</dbReference>
<dbReference type="VEuPathDB" id="HostDB:ENSMUSG00000034761"/>
<dbReference type="eggNOG" id="KOG0576">
    <property type="taxonomic scope" value="Eukaryota"/>
</dbReference>
<dbReference type="GeneTree" id="ENSGT00940000158072"/>
<dbReference type="HOGENOM" id="CLU_006347_1_0_1"/>
<dbReference type="InParanoid" id="Q8BPM2"/>
<dbReference type="OrthoDB" id="8693905at2759"/>
<dbReference type="PhylomeDB" id="Q8BPM2"/>
<dbReference type="TreeFam" id="TF105121"/>
<dbReference type="BioGRID-ORCS" id="399510">
    <property type="hits" value="3 hits in 42 CRISPR screens"/>
</dbReference>
<dbReference type="ChiTaRS" id="Map4k5">
    <property type="organism name" value="mouse"/>
</dbReference>
<dbReference type="PRO" id="PR:Q8BPM2"/>
<dbReference type="Proteomes" id="UP000000589">
    <property type="component" value="Chromosome 12"/>
</dbReference>
<dbReference type="RNAct" id="Q8BPM2">
    <property type="molecule type" value="protein"/>
</dbReference>
<dbReference type="Bgee" id="ENSMUSG00000034761">
    <property type="expression patterns" value="Expressed in secondary oocyte and 252 other cell types or tissues"/>
</dbReference>
<dbReference type="ExpressionAtlas" id="Q8BPM2">
    <property type="expression patterns" value="baseline and differential"/>
</dbReference>
<dbReference type="GO" id="GO:0005929">
    <property type="term" value="C:cilium"/>
    <property type="evidence" value="ECO:0007669"/>
    <property type="project" value="Ensembl"/>
</dbReference>
<dbReference type="GO" id="GO:0005737">
    <property type="term" value="C:cytoplasm"/>
    <property type="evidence" value="ECO:0000250"/>
    <property type="project" value="UniProtKB"/>
</dbReference>
<dbReference type="GO" id="GO:0005829">
    <property type="term" value="C:cytosol"/>
    <property type="evidence" value="ECO:0007669"/>
    <property type="project" value="Ensembl"/>
</dbReference>
<dbReference type="GO" id="GO:0005886">
    <property type="term" value="C:plasma membrane"/>
    <property type="evidence" value="ECO:0007669"/>
    <property type="project" value="Ensembl"/>
</dbReference>
<dbReference type="GO" id="GO:0005524">
    <property type="term" value="F:ATP binding"/>
    <property type="evidence" value="ECO:0000250"/>
    <property type="project" value="UniProtKB"/>
</dbReference>
<dbReference type="GO" id="GO:0008349">
    <property type="term" value="F:MAP kinase kinase kinase kinase activity"/>
    <property type="evidence" value="ECO:0007669"/>
    <property type="project" value="InterPro"/>
</dbReference>
<dbReference type="GO" id="GO:0106310">
    <property type="term" value="F:protein serine kinase activity"/>
    <property type="evidence" value="ECO:0007669"/>
    <property type="project" value="RHEA"/>
</dbReference>
<dbReference type="GO" id="GO:0004674">
    <property type="term" value="F:protein serine/threonine kinase activity"/>
    <property type="evidence" value="ECO:0000250"/>
    <property type="project" value="UniProtKB"/>
</dbReference>
<dbReference type="GO" id="GO:0035556">
    <property type="term" value="P:intracellular signal transduction"/>
    <property type="evidence" value="ECO:0000250"/>
    <property type="project" value="UniProtKB"/>
</dbReference>
<dbReference type="CDD" id="cd06646">
    <property type="entry name" value="STKc_MAP4K5"/>
    <property type="match status" value="1"/>
</dbReference>
<dbReference type="FunFam" id="1.10.510.10:FF:000031">
    <property type="entry name" value="Mitogen-activated protein kinase kinase kinase kinase"/>
    <property type="match status" value="1"/>
</dbReference>
<dbReference type="Gene3D" id="1.10.510.10">
    <property type="entry name" value="Transferase(Phosphotransferase) domain 1"/>
    <property type="match status" value="1"/>
</dbReference>
<dbReference type="InterPro" id="IPR001180">
    <property type="entry name" value="CNH_dom"/>
</dbReference>
<dbReference type="InterPro" id="IPR011009">
    <property type="entry name" value="Kinase-like_dom_sf"/>
</dbReference>
<dbReference type="InterPro" id="IPR021160">
    <property type="entry name" value="MAPKKKK"/>
</dbReference>
<dbReference type="InterPro" id="IPR000719">
    <property type="entry name" value="Prot_kinase_dom"/>
</dbReference>
<dbReference type="InterPro" id="IPR017441">
    <property type="entry name" value="Protein_kinase_ATP_BS"/>
</dbReference>
<dbReference type="InterPro" id="IPR050629">
    <property type="entry name" value="STE20/SPS1-PAK"/>
</dbReference>
<dbReference type="PANTHER" id="PTHR48012:SF19">
    <property type="entry name" value="MITOGEN-ACTIVATED PROTEIN KINASE KINASE KINASE KINASE 5"/>
    <property type="match status" value="1"/>
</dbReference>
<dbReference type="PANTHER" id="PTHR48012">
    <property type="entry name" value="STERILE20-LIKE KINASE, ISOFORM B-RELATED"/>
    <property type="match status" value="1"/>
</dbReference>
<dbReference type="Pfam" id="PF00780">
    <property type="entry name" value="CNH"/>
    <property type="match status" value="1"/>
</dbReference>
<dbReference type="Pfam" id="PF00069">
    <property type="entry name" value="Pkinase"/>
    <property type="match status" value="1"/>
</dbReference>
<dbReference type="PIRSF" id="PIRSF038172">
    <property type="entry name" value="MAPKKKK"/>
    <property type="match status" value="1"/>
</dbReference>
<dbReference type="SMART" id="SM00036">
    <property type="entry name" value="CNH"/>
    <property type="match status" value="1"/>
</dbReference>
<dbReference type="SMART" id="SM00220">
    <property type="entry name" value="S_TKc"/>
    <property type="match status" value="1"/>
</dbReference>
<dbReference type="SUPFAM" id="SSF56112">
    <property type="entry name" value="Protein kinase-like (PK-like)"/>
    <property type="match status" value="1"/>
</dbReference>
<dbReference type="PROSITE" id="PS50219">
    <property type="entry name" value="CNH"/>
    <property type="match status" value="1"/>
</dbReference>
<dbReference type="PROSITE" id="PS00107">
    <property type="entry name" value="PROTEIN_KINASE_ATP"/>
    <property type="match status" value="1"/>
</dbReference>
<dbReference type="PROSITE" id="PS50011">
    <property type="entry name" value="PROTEIN_KINASE_DOM"/>
    <property type="match status" value="1"/>
</dbReference>
<protein>
    <recommendedName>
        <fullName>Mitogen-activated protein kinase kinase kinase kinase 5</fullName>
        <ecNumber>2.7.11.1</ecNumber>
    </recommendedName>
    <alternativeName>
        <fullName>MAPK/ERK kinase kinase kinase 5</fullName>
        <shortName>MEK kinase kinase 5</shortName>
        <shortName>MEKKK 5</shortName>
    </alternativeName>
</protein>
<name>M4K5_MOUSE</name>
<organism>
    <name type="scientific">Mus musculus</name>
    <name type="common">Mouse</name>
    <dbReference type="NCBI Taxonomy" id="10090"/>
    <lineage>
        <taxon>Eukaryota</taxon>
        <taxon>Metazoa</taxon>
        <taxon>Chordata</taxon>
        <taxon>Craniata</taxon>
        <taxon>Vertebrata</taxon>
        <taxon>Euteleostomi</taxon>
        <taxon>Mammalia</taxon>
        <taxon>Eutheria</taxon>
        <taxon>Euarchontoglires</taxon>
        <taxon>Glires</taxon>
        <taxon>Rodentia</taxon>
        <taxon>Myomorpha</taxon>
        <taxon>Muroidea</taxon>
        <taxon>Muridae</taxon>
        <taxon>Murinae</taxon>
        <taxon>Mus</taxon>
        <taxon>Mus</taxon>
    </lineage>
</organism>
<gene>
    <name evidence="10" type="primary">Map4k5</name>
</gene>
<sequence>MEAPLRPAADILRRNPQHDYELVQRVGSGTYGDVYKARNVHTGELAAVKIIKLEPGDDFSLIQQEIFMVKECKHCNIVAYFGSYLSREKLWICMEYCGGGSLQDIYHVTGPLSEMQIAYVCRETLQGLAYLHTKGKMHRDIKGANILLTDHGDVKLADFGVAAKITATIAKRKSFIGTPYWMAPEVAAVEKNGGYNQLCDIWAVGITAIELGELQPPMFDLHPMRALFLMSKSNFQPPKLKDKTKWSSTFHNFVKIALTKNPKKRPTAERLLTHTFVGQPGLSRALAVELLDKVSNPDNHAPYSEGDEDDLEPHAIIRHTIRSTNRNSRAERTASEINFDKLQFEPPLRKETEARDEMGLSSEPNFILHWNPFVDGANTGRSTSKRAIPPPLPPKPRVNTYPEDSLPDEEKSSTIKRCPDLEARAPQVLRRQSSPSCVPVAETSSSIGNGDGISKLISENTEGSAQAPQLPRKKDKRDFPKPTINGLPPTPKVLMGACFSKVFDGCPLKINCATSWIHPDTKDQYIIFGTEDGIYTLNLNELHEATMEQLFPRKCTWLYVINNTLMSLSEGKTFQLYSHNLIALFEQAKKPGLAAHIQTHRFPDRILPRKFALTTKIPDTKGCHKCCIVRNPYTGHKYLCGALQSGIVLLQWYEPMQKFMLIKHFDFPLPSPLNVFEMLVIPEQEYPMVCVAISKGSDSSQVVQFETINLNSASSWFTEIGAGSQQLDSIHVTQLERDTVLVCLDKFVKIVNLQGKLKSSKKLASELSFDFRIESVVCLQDSVLAFWKHGMQGKSFKSDEVTQEISDETRVFRLLGSDRVVVLESRPTENPAAHSNLYILAGHENSY</sequence>
<reference key="1">
    <citation type="journal article" date="2005" name="Science">
        <title>The transcriptional landscape of the mammalian genome.</title>
        <authorList>
            <person name="Carninci P."/>
            <person name="Kasukawa T."/>
            <person name="Katayama S."/>
            <person name="Gough J."/>
            <person name="Frith M.C."/>
            <person name="Maeda N."/>
            <person name="Oyama R."/>
            <person name="Ravasi T."/>
            <person name="Lenhard B."/>
            <person name="Wells C."/>
            <person name="Kodzius R."/>
            <person name="Shimokawa K."/>
            <person name="Bajic V.B."/>
            <person name="Brenner S.E."/>
            <person name="Batalov S."/>
            <person name="Forrest A.R."/>
            <person name="Zavolan M."/>
            <person name="Davis M.J."/>
            <person name="Wilming L.G."/>
            <person name="Aidinis V."/>
            <person name="Allen J.E."/>
            <person name="Ambesi-Impiombato A."/>
            <person name="Apweiler R."/>
            <person name="Aturaliya R.N."/>
            <person name="Bailey T.L."/>
            <person name="Bansal M."/>
            <person name="Baxter L."/>
            <person name="Beisel K.W."/>
            <person name="Bersano T."/>
            <person name="Bono H."/>
            <person name="Chalk A.M."/>
            <person name="Chiu K.P."/>
            <person name="Choudhary V."/>
            <person name="Christoffels A."/>
            <person name="Clutterbuck D.R."/>
            <person name="Crowe M.L."/>
            <person name="Dalla E."/>
            <person name="Dalrymple B.P."/>
            <person name="de Bono B."/>
            <person name="Della Gatta G."/>
            <person name="di Bernardo D."/>
            <person name="Down T."/>
            <person name="Engstrom P."/>
            <person name="Fagiolini M."/>
            <person name="Faulkner G."/>
            <person name="Fletcher C.F."/>
            <person name="Fukushima T."/>
            <person name="Furuno M."/>
            <person name="Futaki S."/>
            <person name="Gariboldi M."/>
            <person name="Georgii-Hemming P."/>
            <person name="Gingeras T.R."/>
            <person name="Gojobori T."/>
            <person name="Green R.E."/>
            <person name="Gustincich S."/>
            <person name="Harbers M."/>
            <person name="Hayashi Y."/>
            <person name="Hensch T.K."/>
            <person name="Hirokawa N."/>
            <person name="Hill D."/>
            <person name="Huminiecki L."/>
            <person name="Iacono M."/>
            <person name="Ikeo K."/>
            <person name="Iwama A."/>
            <person name="Ishikawa T."/>
            <person name="Jakt M."/>
            <person name="Kanapin A."/>
            <person name="Katoh M."/>
            <person name="Kawasawa Y."/>
            <person name="Kelso J."/>
            <person name="Kitamura H."/>
            <person name="Kitano H."/>
            <person name="Kollias G."/>
            <person name="Krishnan S.P."/>
            <person name="Kruger A."/>
            <person name="Kummerfeld S.K."/>
            <person name="Kurochkin I.V."/>
            <person name="Lareau L.F."/>
            <person name="Lazarevic D."/>
            <person name="Lipovich L."/>
            <person name="Liu J."/>
            <person name="Liuni S."/>
            <person name="McWilliam S."/>
            <person name="Madan Babu M."/>
            <person name="Madera M."/>
            <person name="Marchionni L."/>
            <person name="Matsuda H."/>
            <person name="Matsuzawa S."/>
            <person name="Miki H."/>
            <person name="Mignone F."/>
            <person name="Miyake S."/>
            <person name="Morris K."/>
            <person name="Mottagui-Tabar S."/>
            <person name="Mulder N."/>
            <person name="Nakano N."/>
            <person name="Nakauchi H."/>
            <person name="Ng P."/>
            <person name="Nilsson R."/>
            <person name="Nishiguchi S."/>
            <person name="Nishikawa S."/>
            <person name="Nori F."/>
            <person name="Ohara O."/>
            <person name="Okazaki Y."/>
            <person name="Orlando V."/>
            <person name="Pang K.C."/>
            <person name="Pavan W.J."/>
            <person name="Pavesi G."/>
            <person name="Pesole G."/>
            <person name="Petrovsky N."/>
            <person name="Piazza S."/>
            <person name="Reed J."/>
            <person name="Reid J.F."/>
            <person name="Ring B.Z."/>
            <person name="Ringwald M."/>
            <person name="Rost B."/>
            <person name="Ruan Y."/>
            <person name="Salzberg S.L."/>
            <person name="Sandelin A."/>
            <person name="Schneider C."/>
            <person name="Schoenbach C."/>
            <person name="Sekiguchi K."/>
            <person name="Semple C.A."/>
            <person name="Seno S."/>
            <person name="Sessa L."/>
            <person name="Sheng Y."/>
            <person name="Shibata Y."/>
            <person name="Shimada H."/>
            <person name="Shimada K."/>
            <person name="Silva D."/>
            <person name="Sinclair B."/>
            <person name="Sperling S."/>
            <person name="Stupka E."/>
            <person name="Sugiura K."/>
            <person name="Sultana R."/>
            <person name="Takenaka Y."/>
            <person name="Taki K."/>
            <person name="Tammoja K."/>
            <person name="Tan S.L."/>
            <person name="Tang S."/>
            <person name="Taylor M.S."/>
            <person name="Tegner J."/>
            <person name="Teichmann S.A."/>
            <person name="Ueda H.R."/>
            <person name="van Nimwegen E."/>
            <person name="Verardo R."/>
            <person name="Wei C.L."/>
            <person name="Yagi K."/>
            <person name="Yamanishi H."/>
            <person name="Zabarovsky E."/>
            <person name="Zhu S."/>
            <person name="Zimmer A."/>
            <person name="Hide W."/>
            <person name="Bult C."/>
            <person name="Grimmond S.M."/>
            <person name="Teasdale R.D."/>
            <person name="Liu E.T."/>
            <person name="Brusic V."/>
            <person name="Quackenbush J."/>
            <person name="Wahlestedt C."/>
            <person name="Mattick J.S."/>
            <person name="Hume D.A."/>
            <person name="Kai C."/>
            <person name="Sasaki D."/>
            <person name="Tomaru Y."/>
            <person name="Fukuda S."/>
            <person name="Kanamori-Katayama M."/>
            <person name="Suzuki M."/>
            <person name="Aoki J."/>
            <person name="Arakawa T."/>
            <person name="Iida J."/>
            <person name="Imamura K."/>
            <person name="Itoh M."/>
            <person name="Kato T."/>
            <person name="Kawaji H."/>
            <person name="Kawagashira N."/>
            <person name="Kawashima T."/>
            <person name="Kojima M."/>
            <person name="Kondo S."/>
            <person name="Konno H."/>
            <person name="Nakano K."/>
            <person name="Ninomiya N."/>
            <person name="Nishio T."/>
            <person name="Okada M."/>
            <person name="Plessy C."/>
            <person name="Shibata K."/>
            <person name="Shiraki T."/>
            <person name="Suzuki S."/>
            <person name="Tagami M."/>
            <person name="Waki K."/>
            <person name="Watahiki A."/>
            <person name="Okamura-Oho Y."/>
            <person name="Suzuki H."/>
            <person name="Kawai J."/>
            <person name="Hayashizaki Y."/>
        </authorList>
    </citation>
    <scope>NUCLEOTIDE SEQUENCE [LARGE SCALE MRNA] (ISOFORMS 1 AND 2)</scope>
    <source>
        <strain>C57BL/6J</strain>
        <tissue>Fetal eye</tissue>
        <tissue>Fetal liver</tissue>
        <tissue>Fetal lung</tissue>
    </source>
</reference>
<reference evidence="8 9" key="2">
    <citation type="journal article" date="2004" name="Genome Res.">
        <title>The status, quality, and expansion of the NIH full-length cDNA project: the Mammalian Gene Collection (MGC).</title>
        <authorList>
            <consortium name="The MGC Project Team"/>
        </authorList>
    </citation>
    <scope>NUCLEOTIDE SEQUENCE [LARGE SCALE MRNA] (ISOFORM 1)</scope>
    <source>
        <strain>Czech II</strain>
        <tissue>Mammary gland</tissue>
    </source>
</reference>
<reference key="3">
    <citation type="journal article" date="2007" name="Proc. Natl. Acad. Sci. U.S.A.">
        <title>Large-scale phosphorylation analysis of mouse liver.</title>
        <authorList>
            <person name="Villen J."/>
            <person name="Beausoleil S.A."/>
            <person name="Gerber S.A."/>
            <person name="Gygi S.P."/>
        </authorList>
    </citation>
    <scope>PHOSPHORYLATION [LARGE SCALE ANALYSIS] AT SER-335</scope>
    <scope>IDENTIFICATION BY MASS SPECTROMETRY [LARGE SCALE ANALYSIS]</scope>
    <source>
        <tissue>Liver</tissue>
    </source>
</reference>
<reference key="4">
    <citation type="journal article" date="2009" name="Mol. Cell. Proteomics">
        <title>Large scale localization of protein phosphorylation by use of electron capture dissociation mass spectrometry.</title>
        <authorList>
            <person name="Sweet S.M."/>
            <person name="Bailey C.M."/>
            <person name="Cunningham D.L."/>
            <person name="Heath J.K."/>
            <person name="Cooper H.J."/>
        </authorList>
    </citation>
    <scope>IDENTIFICATION BY MASS SPECTROMETRY [LARGE SCALE ANALYSIS]</scope>
    <source>
        <tissue>Embryonic fibroblast</tissue>
    </source>
</reference>
<reference key="5">
    <citation type="journal article" date="2010" name="Cell">
        <title>A tissue-specific atlas of mouse protein phosphorylation and expression.</title>
        <authorList>
            <person name="Huttlin E.L."/>
            <person name="Jedrychowski M.P."/>
            <person name="Elias J.E."/>
            <person name="Goswami T."/>
            <person name="Rad R."/>
            <person name="Beausoleil S.A."/>
            <person name="Villen J."/>
            <person name="Haas W."/>
            <person name="Sowa M.E."/>
            <person name="Gygi S.P."/>
        </authorList>
    </citation>
    <scope>PHOSPHORYLATION [LARGE SCALE ANALYSIS] AT SER-433</scope>
    <scope>IDENTIFICATION BY MASS SPECTROMETRY [LARGE SCALE ANALYSIS]</scope>
    <source>
        <tissue>Brain</tissue>
        <tissue>Brown adipose tissue</tissue>
        <tissue>Heart</tissue>
        <tissue>Kidney</tissue>
        <tissue>Liver</tissue>
        <tissue>Lung</tissue>
        <tissue>Pancreas</tissue>
        <tissue>Spleen</tissue>
        <tissue>Testis</tissue>
    </source>
</reference>
<feature type="chain" id="PRO_0000086283" description="Mitogen-activated protein kinase kinase kinase kinase 5">
    <location>
        <begin position="1"/>
        <end position="847"/>
    </location>
</feature>
<feature type="domain" description="Protein kinase" evidence="4 8">
    <location>
        <begin position="20"/>
        <end position="277"/>
    </location>
</feature>
<feature type="domain" description="CNH" evidence="5">
    <location>
        <begin position="507"/>
        <end position="820"/>
    </location>
</feature>
<feature type="region of interest" description="Disordered" evidence="6">
    <location>
        <begin position="378"/>
        <end position="487"/>
    </location>
</feature>
<feature type="compositionally biased region" description="Basic and acidic residues" evidence="6">
    <location>
        <begin position="408"/>
        <end position="423"/>
    </location>
</feature>
<feature type="compositionally biased region" description="Polar residues" evidence="6">
    <location>
        <begin position="430"/>
        <end position="448"/>
    </location>
</feature>
<feature type="compositionally biased region" description="Polar residues" evidence="6">
    <location>
        <begin position="457"/>
        <end position="467"/>
    </location>
</feature>
<feature type="active site" description="Proton acceptor" evidence="2 4">
    <location>
        <position position="140"/>
    </location>
</feature>
<feature type="binding site" evidence="2 4">
    <location>
        <begin position="26"/>
        <end position="34"/>
    </location>
    <ligand>
        <name>ATP</name>
        <dbReference type="ChEBI" id="CHEBI:30616"/>
    </ligand>
</feature>
<feature type="binding site" evidence="3 4">
    <location>
        <position position="49"/>
    </location>
    <ligand>
        <name>ATP</name>
        <dbReference type="ChEBI" id="CHEBI:30616"/>
    </ligand>
</feature>
<feature type="modified residue" description="Phosphoserine" evidence="11">
    <location>
        <position position="335"/>
    </location>
</feature>
<feature type="modified residue" description="Phosphoserine" evidence="12">
    <location>
        <position position="433"/>
    </location>
</feature>
<feature type="splice variant" id="VSP_050478" description="In isoform 2." evidence="7">
    <location>
        <begin position="294"/>
        <end position="312"/>
    </location>
</feature>
<feature type="sequence conflict" description="In Ref. 1; BAC35517." evidence="8" ref="1">
    <original>A</original>
    <variation>P</variation>
    <location>
        <position position="79"/>
    </location>
</feature>
<feature type="sequence conflict" description="In Ref. 1; BAC35517." evidence="8" ref="1">
    <original>Q</original>
    <variation>H</variation>
    <location>
        <position position="103"/>
    </location>
</feature>
<feature type="sequence conflict" description="In Ref. 1; BAC35517." evidence="8" ref="1">
    <original>A</original>
    <variation>P</variation>
    <location>
        <position position="118"/>
    </location>
</feature>
<feature type="sequence conflict" description="In Ref. 2; AAH40381." evidence="8" ref="2">
    <original>A</original>
    <variation>V</variation>
    <location>
        <position position="441"/>
    </location>
</feature>
<feature type="sequence conflict" description="In Ref. 1; BAB31739." evidence="8" ref="1">
    <original>L</original>
    <variation>Q</variation>
    <location>
        <position position="727"/>
    </location>
</feature>
<proteinExistence type="evidence at protein level"/>
<comment type="function">
    <text evidence="1">May play a role in the response to environmental stress. Appears to act upstream of the JUN N-terminal pathway (By similarity).</text>
</comment>
<comment type="catalytic activity">
    <reaction evidence="3">
        <text>L-seryl-[protein] + ATP = O-phospho-L-seryl-[protein] + ADP + H(+)</text>
        <dbReference type="Rhea" id="RHEA:17989"/>
        <dbReference type="Rhea" id="RHEA-COMP:9863"/>
        <dbReference type="Rhea" id="RHEA-COMP:11604"/>
        <dbReference type="ChEBI" id="CHEBI:15378"/>
        <dbReference type="ChEBI" id="CHEBI:29999"/>
        <dbReference type="ChEBI" id="CHEBI:30616"/>
        <dbReference type="ChEBI" id="CHEBI:83421"/>
        <dbReference type="ChEBI" id="CHEBI:456216"/>
        <dbReference type="EC" id="2.7.11.1"/>
    </reaction>
</comment>
<comment type="catalytic activity">
    <reaction evidence="3">
        <text>L-threonyl-[protein] + ATP = O-phospho-L-threonyl-[protein] + ADP + H(+)</text>
        <dbReference type="Rhea" id="RHEA:46608"/>
        <dbReference type="Rhea" id="RHEA-COMP:11060"/>
        <dbReference type="Rhea" id="RHEA-COMP:11605"/>
        <dbReference type="ChEBI" id="CHEBI:15378"/>
        <dbReference type="ChEBI" id="CHEBI:30013"/>
        <dbReference type="ChEBI" id="CHEBI:30616"/>
        <dbReference type="ChEBI" id="CHEBI:61977"/>
        <dbReference type="ChEBI" id="CHEBI:456216"/>
        <dbReference type="EC" id="2.7.11.1"/>
    </reaction>
</comment>
<comment type="cofactor">
    <cofactor evidence="3">
        <name>Mg(2+)</name>
        <dbReference type="ChEBI" id="CHEBI:18420"/>
    </cofactor>
</comment>
<comment type="subunit">
    <text evidence="3">Interacts with both SH3 domains of the adapter proteins CRK and CRKL.</text>
</comment>
<comment type="subcellular location">
    <subcellularLocation>
        <location evidence="1">Cytoplasm</location>
    </subcellularLocation>
</comment>
<comment type="alternative products">
    <event type="alternative splicing"/>
    <isoform>
        <id>Q8BPM2-1</id>
        <name evidence="8">1</name>
        <sequence type="displayed"/>
    </isoform>
    <isoform>
        <id>Q8BPM2-2</id>
        <name evidence="8">2</name>
        <sequence type="described" ref="VSP_050478"/>
    </isoform>
</comment>
<comment type="similarity">
    <text evidence="8">Belongs to the protein kinase superfamily. STE Ser/Thr protein kinase family. STE20 subfamily.</text>
</comment>
<evidence type="ECO:0000250" key="1"/>
<evidence type="ECO:0000250" key="2">
    <source>
        <dbReference type="UniProtKB" id="O00506"/>
    </source>
</evidence>
<evidence type="ECO:0000250" key="3">
    <source>
        <dbReference type="UniProtKB" id="Q9Y4K4"/>
    </source>
</evidence>
<evidence type="ECO:0000255" key="4">
    <source>
        <dbReference type="PROSITE-ProRule" id="PRU00159"/>
    </source>
</evidence>
<evidence type="ECO:0000255" key="5">
    <source>
        <dbReference type="PROSITE-ProRule" id="PRU00795"/>
    </source>
</evidence>
<evidence type="ECO:0000256" key="6">
    <source>
        <dbReference type="SAM" id="MobiDB-lite"/>
    </source>
</evidence>
<evidence type="ECO:0000303" key="7">
    <source>
    </source>
</evidence>
<evidence type="ECO:0000305" key="8"/>
<evidence type="ECO:0000312" key="9">
    <source>
        <dbReference type="EMBL" id="AAH02309.1"/>
    </source>
</evidence>
<evidence type="ECO:0000312" key="10">
    <source>
        <dbReference type="MGI" id="MGI:1925503"/>
    </source>
</evidence>
<evidence type="ECO:0007744" key="11">
    <source>
    </source>
</evidence>
<evidence type="ECO:0007744" key="12">
    <source>
    </source>
</evidence>